<accession>Q1MQ25</accession>
<name>TRMFO_LAWIP</name>
<organism>
    <name type="scientific">Lawsonia intracellularis (strain PHE/MN1-00)</name>
    <dbReference type="NCBI Taxonomy" id="363253"/>
    <lineage>
        <taxon>Bacteria</taxon>
        <taxon>Pseudomonadati</taxon>
        <taxon>Thermodesulfobacteriota</taxon>
        <taxon>Desulfovibrionia</taxon>
        <taxon>Desulfovibrionales</taxon>
        <taxon>Desulfovibrionaceae</taxon>
        <taxon>Lawsonia</taxon>
    </lineage>
</organism>
<dbReference type="EC" id="2.1.1.74" evidence="1"/>
<dbReference type="EMBL" id="AM180252">
    <property type="protein sequence ID" value="CAJ54902.1"/>
    <property type="molecule type" value="Genomic_DNA"/>
</dbReference>
<dbReference type="RefSeq" id="WP_011526931.1">
    <property type="nucleotide sequence ID" value="NC_008011.1"/>
</dbReference>
<dbReference type="SMR" id="Q1MQ25"/>
<dbReference type="STRING" id="363253.LI0848"/>
<dbReference type="KEGG" id="lip:LI0848"/>
<dbReference type="eggNOG" id="COG1206">
    <property type="taxonomic scope" value="Bacteria"/>
</dbReference>
<dbReference type="HOGENOM" id="CLU_033057_1_0_7"/>
<dbReference type="OrthoDB" id="9803114at2"/>
<dbReference type="Proteomes" id="UP000002430">
    <property type="component" value="Chromosome"/>
</dbReference>
<dbReference type="GO" id="GO:0005829">
    <property type="term" value="C:cytosol"/>
    <property type="evidence" value="ECO:0007669"/>
    <property type="project" value="TreeGrafter"/>
</dbReference>
<dbReference type="GO" id="GO:0050660">
    <property type="term" value="F:flavin adenine dinucleotide binding"/>
    <property type="evidence" value="ECO:0007669"/>
    <property type="project" value="UniProtKB-UniRule"/>
</dbReference>
<dbReference type="GO" id="GO:0047151">
    <property type="term" value="F:tRNA (uracil(54)-C5)-methyltransferase activity, 5,10-methylenetetrahydrofolate-dependent"/>
    <property type="evidence" value="ECO:0007669"/>
    <property type="project" value="UniProtKB-UniRule"/>
</dbReference>
<dbReference type="GO" id="GO:0030488">
    <property type="term" value="P:tRNA methylation"/>
    <property type="evidence" value="ECO:0007669"/>
    <property type="project" value="TreeGrafter"/>
</dbReference>
<dbReference type="GO" id="GO:0002098">
    <property type="term" value="P:tRNA wobble uridine modification"/>
    <property type="evidence" value="ECO:0007669"/>
    <property type="project" value="TreeGrafter"/>
</dbReference>
<dbReference type="Gene3D" id="3.50.50.60">
    <property type="entry name" value="FAD/NAD(P)-binding domain"/>
    <property type="match status" value="2"/>
</dbReference>
<dbReference type="HAMAP" id="MF_01037">
    <property type="entry name" value="TrmFO"/>
    <property type="match status" value="1"/>
</dbReference>
<dbReference type="InterPro" id="IPR036188">
    <property type="entry name" value="FAD/NAD-bd_sf"/>
</dbReference>
<dbReference type="InterPro" id="IPR002218">
    <property type="entry name" value="MnmG-rel"/>
</dbReference>
<dbReference type="InterPro" id="IPR040131">
    <property type="entry name" value="MnmG_N"/>
</dbReference>
<dbReference type="InterPro" id="IPR004417">
    <property type="entry name" value="TrmFO"/>
</dbReference>
<dbReference type="NCBIfam" id="TIGR00137">
    <property type="entry name" value="gid_trmFO"/>
    <property type="match status" value="1"/>
</dbReference>
<dbReference type="NCBIfam" id="NF003739">
    <property type="entry name" value="PRK05335.1"/>
    <property type="match status" value="1"/>
</dbReference>
<dbReference type="PANTHER" id="PTHR11806">
    <property type="entry name" value="GLUCOSE INHIBITED DIVISION PROTEIN A"/>
    <property type="match status" value="1"/>
</dbReference>
<dbReference type="PANTHER" id="PTHR11806:SF2">
    <property type="entry name" value="METHYLENETETRAHYDROFOLATE--TRNA-(URACIL-5-)-METHYLTRANSFERASE TRMFO"/>
    <property type="match status" value="1"/>
</dbReference>
<dbReference type="Pfam" id="PF01134">
    <property type="entry name" value="GIDA"/>
    <property type="match status" value="1"/>
</dbReference>
<dbReference type="SUPFAM" id="SSF51905">
    <property type="entry name" value="FAD/NAD(P)-binding domain"/>
    <property type="match status" value="1"/>
</dbReference>
<gene>
    <name evidence="1" type="primary">trmFO</name>
    <name type="ordered locus">LI0848</name>
</gene>
<sequence>MNIHNIAIIGGGLSGCECALTLAKFGFSVTLFEQKPQLFSPAHNTPLLAELVCSNSLRSNELTTGIGLLKQELRELNSPLMAIADTCRVPAGKALAVDRELFSKQVTQLIESHPKIHLIREEVSSLSTSFLEKYDRIIVATGPLASPNISNSLSTLIGDKYLYFYDAIAPIVTADSIDMSIAFWGSRYEEQGEGDYLNCPMSYEEYQIFYSSLLKGEKVTNSKVEKEIHFEGCMPIEALAERGEKTLLFGPFKPVGLINPHTGLRPYAVLQLRPENLNKSMLNLVGCQTKLTYPAQDTIFRLVPGLSNVEFVRFGSMHRNTYINSPKILTDQLALRNFPCIHLAGQITGVEGYVESIACGLWVSILLLALSKDKKILRPPKTCALGGLLEHISCPSKQFQPSNIHFGLVPEPTEKIKKKERKEWYAQRARIDFYHWLNNELIHIM</sequence>
<keyword id="KW-0963">Cytoplasm</keyword>
<keyword id="KW-0274">FAD</keyword>
<keyword id="KW-0285">Flavoprotein</keyword>
<keyword id="KW-0489">Methyltransferase</keyword>
<keyword id="KW-0520">NAD</keyword>
<keyword id="KW-0521">NADP</keyword>
<keyword id="KW-1185">Reference proteome</keyword>
<keyword id="KW-0808">Transferase</keyword>
<keyword id="KW-0819">tRNA processing</keyword>
<feature type="chain" id="PRO_0000346349" description="Methylenetetrahydrofolate--tRNA-(uracil-5-)-methyltransferase TrmFO">
    <location>
        <begin position="1"/>
        <end position="445"/>
    </location>
</feature>
<feature type="binding site" evidence="1">
    <location>
        <begin position="10"/>
        <end position="15"/>
    </location>
    <ligand>
        <name>FAD</name>
        <dbReference type="ChEBI" id="CHEBI:57692"/>
    </ligand>
</feature>
<protein>
    <recommendedName>
        <fullName evidence="1">Methylenetetrahydrofolate--tRNA-(uracil-5-)-methyltransferase TrmFO</fullName>
        <ecNumber evidence="1">2.1.1.74</ecNumber>
    </recommendedName>
    <alternativeName>
        <fullName evidence="1">Folate-dependent tRNA (uracil-5-)-methyltransferase</fullName>
    </alternativeName>
    <alternativeName>
        <fullName evidence="1">Folate-dependent tRNA(M-5-U54)-methyltransferase</fullName>
    </alternativeName>
</protein>
<proteinExistence type="inferred from homology"/>
<comment type="function">
    <text evidence="1">Catalyzes the folate-dependent formation of 5-methyl-uridine at position 54 (M-5-U54) in all tRNAs.</text>
</comment>
<comment type="catalytic activity">
    <reaction evidence="1">
        <text>uridine(54) in tRNA + (6R)-5,10-methylene-5,6,7,8-tetrahydrofolate + NADH + H(+) = 5-methyluridine(54) in tRNA + (6S)-5,6,7,8-tetrahydrofolate + NAD(+)</text>
        <dbReference type="Rhea" id="RHEA:16873"/>
        <dbReference type="Rhea" id="RHEA-COMP:10167"/>
        <dbReference type="Rhea" id="RHEA-COMP:10193"/>
        <dbReference type="ChEBI" id="CHEBI:15378"/>
        <dbReference type="ChEBI" id="CHEBI:15636"/>
        <dbReference type="ChEBI" id="CHEBI:57453"/>
        <dbReference type="ChEBI" id="CHEBI:57540"/>
        <dbReference type="ChEBI" id="CHEBI:57945"/>
        <dbReference type="ChEBI" id="CHEBI:65315"/>
        <dbReference type="ChEBI" id="CHEBI:74447"/>
        <dbReference type="EC" id="2.1.1.74"/>
    </reaction>
</comment>
<comment type="catalytic activity">
    <reaction evidence="1">
        <text>uridine(54) in tRNA + (6R)-5,10-methylene-5,6,7,8-tetrahydrofolate + NADPH + H(+) = 5-methyluridine(54) in tRNA + (6S)-5,6,7,8-tetrahydrofolate + NADP(+)</text>
        <dbReference type="Rhea" id="RHEA:62372"/>
        <dbReference type="Rhea" id="RHEA-COMP:10167"/>
        <dbReference type="Rhea" id="RHEA-COMP:10193"/>
        <dbReference type="ChEBI" id="CHEBI:15378"/>
        <dbReference type="ChEBI" id="CHEBI:15636"/>
        <dbReference type="ChEBI" id="CHEBI:57453"/>
        <dbReference type="ChEBI" id="CHEBI:57783"/>
        <dbReference type="ChEBI" id="CHEBI:58349"/>
        <dbReference type="ChEBI" id="CHEBI:65315"/>
        <dbReference type="ChEBI" id="CHEBI:74447"/>
        <dbReference type="EC" id="2.1.1.74"/>
    </reaction>
</comment>
<comment type="cofactor">
    <cofactor evidence="1">
        <name>FAD</name>
        <dbReference type="ChEBI" id="CHEBI:57692"/>
    </cofactor>
</comment>
<comment type="subcellular location">
    <subcellularLocation>
        <location evidence="1">Cytoplasm</location>
    </subcellularLocation>
</comment>
<comment type="similarity">
    <text evidence="1">Belongs to the MnmG family. TrmFO subfamily.</text>
</comment>
<reference key="1">
    <citation type="submission" date="2005-11" db="EMBL/GenBank/DDBJ databases">
        <title>The complete genome sequence of Lawsonia intracellularis: the causative agent of proliferative enteropathy.</title>
        <authorList>
            <person name="Kaur K."/>
            <person name="Zhang Q."/>
            <person name="Beckler D."/>
            <person name="Munir S."/>
            <person name="Li L."/>
            <person name="Kinsley K."/>
            <person name="Herron L."/>
            <person name="Peterson A."/>
            <person name="May B."/>
            <person name="Singh S."/>
            <person name="Gebhart C."/>
            <person name="Kapur V."/>
        </authorList>
    </citation>
    <scope>NUCLEOTIDE SEQUENCE [LARGE SCALE GENOMIC DNA]</scope>
    <source>
        <strain>PHE/MN1-00</strain>
    </source>
</reference>
<evidence type="ECO:0000255" key="1">
    <source>
        <dbReference type="HAMAP-Rule" id="MF_01037"/>
    </source>
</evidence>